<evidence type="ECO:0000255" key="1">
    <source>
        <dbReference type="HAMAP-Rule" id="MF_01815"/>
    </source>
</evidence>
<dbReference type="EC" id="2.3.1.180" evidence="1"/>
<dbReference type="EMBL" id="AL111168">
    <property type="protein sequence ID" value="CAL34479.1"/>
    <property type="molecule type" value="Genomic_DNA"/>
</dbReference>
<dbReference type="PIR" id="D81452">
    <property type="entry name" value="D81452"/>
</dbReference>
<dbReference type="RefSeq" id="WP_002858639.1">
    <property type="nucleotide sequence ID" value="NZ_SZUC01000004.1"/>
</dbReference>
<dbReference type="RefSeq" id="YP_002343766.1">
    <property type="nucleotide sequence ID" value="NC_002163.1"/>
</dbReference>
<dbReference type="SMR" id="Q9PIH1"/>
<dbReference type="IntAct" id="Q9PIH1">
    <property type="interactions" value="36"/>
</dbReference>
<dbReference type="STRING" id="192222.Cj0328c"/>
<dbReference type="PaxDb" id="192222-Cj0328c"/>
<dbReference type="EnsemblBacteria" id="CAL34479">
    <property type="protein sequence ID" value="CAL34479"/>
    <property type="gene ID" value="Cj0328c"/>
</dbReference>
<dbReference type="GeneID" id="904652"/>
<dbReference type="KEGG" id="cje:Cj0328c"/>
<dbReference type="PATRIC" id="fig|192222.6.peg.320"/>
<dbReference type="eggNOG" id="COG0332">
    <property type="taxonomic scope" value="Bacteria"/>
</dbReference>
<dbReference type="HOGENOM" id="CLU_039592_4_0_7"/>
<dbReference type="OrthoDB" id="9815506at2"/>
<dbReference type="UniPathway" id="UPA00094"/>
<dbReference type="Proteomes" id="UP000000799">
    <property type="component" value="Chromosome"/>
</dbReference>
<dbReference type="GO" id="GO:0005737">
    <property type="term" value="C:cytoplasm"/>
    <property type="evidence" value="ECO:0007669"/>
    <property type="project" value="UniProtKB-SubCell"/>
</dbReference>
<dbReference type="GO" id="GO:0004315">
    <property type="term" value="F:3-oxoacyl-[acyl-carrier-protein] synthase activity"/>
    <property type="evidence" value="ECO:0007669"/>
    <property type="project" value="InterPro"/>
</dbReference>
<dbReference type="GO" id="GO:0033818">
    <property type="term" value="F:beta-ketoacyl-acyl-carrier-protein synthase III activity"/>
    <property type="evidence" value="ECO:0007669"/>
    <property type="project" value="UniProtKB-UniRule"/>
</dbReference>
<dbReference type="GO" id="GO:0006633">
    <property type="term" value="P:fatty acid biosynthetic process"/>
    <property type="evidence" value="ECO:0007669"/>
    <property type="project" value="UniProtKB-UniRule"/>
</dbReference>
<dbReference type="GO" id="GO:0044550">
    <property type="term" value="P:secondary metabolite biosynthetic process"/>
    <property type="evidence" value="ECO:0007669"/>
    <property type="project" value="TreeGrafter"/>
</dbReference>
<dbReference type="CDD" id="cd00830">
    <property type="entry name" value="KAS_III"/>
    <property type="match status" value="1"/>
</dbReference>
<dbReference type="FunFam" id="3.40.47.10:FF:000004">
    <property type="entry name" value="3-oxoacyl-[acyl-carrier-protein] synthase 3"/>
    <property type="match status" value="1"/>
</dbReference>
<dbReference type="Gene3D" id="3.40.47.10">
    <property type="match status" value="1"/>
</dbReference>
<dbReference type="HAMAP" id="MF_01815">
    <property type="entry name" value="FabH"/>
    <property type="match status" value="1"/>
</dbReference>
<dbReference type="InterPro" id="IPR013747">
    <property type="entry name" value="ACP_syn_III_C"/>
</dbReference>
<dbReference type="InterPro" id="IPR013751">
    <property type="entry name" value="ACP_syn_III_N"/>
</dbReference>
<dbReference type="InterPro" id="IPR004655">
    <property type="entry name" value="FabH"/>
</dbReference>
<dbReference type="InterPro" id="IPR016039">
    <property type="entry name" value="Thiolase-like"/>
</dbReference>
<dbReference type="NCBIfam" id="TIGR00747">
    <property type="entry name" value="fabH"/>
    <property type="match status" value="1"/>
</dbReference>
<dbReference type="NCBIfam" id="NF006829">
    <property type="entry name" value="PRK09352.1"/>
    <property type="match status" value="1"/>
</dbReference>
<dbReference type="PANTHER" id="PTHR34069">
    <property type="entry name" value="3-OXOACYL-[ACYL-CARRIER-PROTEIN] SYNTHASE 3"/>
    <property type="match status" value="1"/>
</dbReference>
<dbReference type="PANTHER" id="PTHR34069:SF2">
    <property type="entry name" value="BETA-KETOACYL-[ACYL-CARRIER-PROTEIN] SYNTHASE III"/>
    <property type="match status" value="1"/>
</dbReference>
<dbReference type="Pfam" id="PF08545">
    <property type="entry name" value="ACP_syn_III"/>
    <property type="match status" value="1"/>
</dbReference>
<dbReference type="Pfam" id="PF08541">
    <property type="entry name" value="ACP_syn_III_C"/>
    <property type="match status" value="1"/>
</dbReference>
<dbReference type="SUPFAM" id="SSF53901">
    <property type="entry name" value="Thiolase-like"/>
    <property type="match status" value="1"/>
</dbReference>
<sequence length="324" mass="35165">MLKASLKSIASYIPEKILSNADLEKMVDTTDEWITRRTGIKERRIASENENTSDLGTKAALKAIERANLKPEDIDAILVATLSPDYFTMPSTACKIASNLGLVNISAFDISAACSGFIYLLEQAKALVESGLKKNVLIIGAEKTSSIMDYNDRSICILFGDGAGAGVVSLDNENHILDVHTASNGNYGDLLMTQRSQKSSLCQTLSMQMKGNEVFKIAVNTLSNDVVEILAKNNILAQEIDLFIPHQANLRIIKAVQEKLNLSDEKCVITVQKYGNTSAASIPMAMNDAYEEGRLKKGNLILLDAFGGGFTWGSALLKFGGENF</sequence>
<protein>
    <recommendedName>
        <fullName evidence="1">Beta-ketoacyl-[acyl-carrier-protein] synthase III</fullName>
        <shortName evidence="1">Beta-ketoacyl-ACP synthase III</shortName>
        <shortName evidence="1">KAS III</shortName>
        <ecNumber evidence="1">2.3.1.180</ecNumber>
    </recommendedName>
    <alternativeName>
        <fullName evidence="1">3-oxoacyl-[acyl-carrier-protein] synthase 3</fullName>
    </alternativeName>
    <alternativeName>
        <fullName evidence="1">3-oxoacyl-[acyl-carrier-protein] synthase III</fullName>
    </alternativeName>
</protein>
<keyword id="KW-0012">Acyltransferase</keyword>
<keyword id="KW-0963">Cytoplasm</keyword>
<keyword id="KW-0275">Fatty acid biosynthesis</keyword>
<keyword id="KW-0276">Fatty acid metabolism</keyword>
<keyword id="KW-0444">Lipid biosynthesis</keyword>
<keyword id="KW-0443">Lipid metabolism</keyword>
<keyword id="KW-0511">Multifunctional enzyme</keyword>
<keyword id="KW-1185">Reference proteome</keyword>
<keyword id="KW-0808">Transferase</keyword>
<organism>
    <name type="scientific">Campylobacter jejuni subsp. jejuni serotype O:2 (strain ATCC 700819 / NCTC 11168)</name>
    <dbReference type="NCBI Taxonomy" id="192222"/>
    <lineage>
        <taxon>Bacteria</taxon>
        <taxon>Pseudomonadati</taxon>
        <taxon>Campylobacterota</taxon>
        <taxon>Epsilonproteobacteria</taxon>
        <taxon>Campylobacterales</taxon>
        <taxon>Campylobacteraceae</taxon>
        <taxon>Campylobacter</taxon>
    </lineage>
</organism>
<reference key="1">
    <citation type="journal article" date="2000" name="Nature">
        <title>The genome sequence of the food-borne pathogen Campylobacter jejuni reveals hypervariable sequences.</title>
        <authorList>
            <person name="Parkhill J."/>
            <person name="Wren B.W."/>
            <person name="Mungall K.L."/>
            <person name="Ketley J.M."/>
            <person name="Churcher C.M."/>
            <person name="Basham D."/>
            <person name="Chillingworth T."/>
            <person name="Davies R.M."/>
            <person name="Feltwell T."/>
            <person name="Holroyd S."/>
            <person name="Jagels K."/>
            <person name="Karlyshev A.V."/>
            <person name="Moule S."/>
            <person name="Pallen M.J."/>
            <person name="Penn C.W."/>
            <person name="Quail M.A."/>
            <person name="Rajandream M.A."/>
            <person name="Rutherford K.M."/>
            <person name="van Vliet A.H.M."/>
            <person name="Whitehead S."/>
            <person name="Barrell B.G."/>
        </authorList>
    </citation>
    <scope>NUCLEOTIDE SEQUENCE [LARGE SCALE GENOMIC DNA]</scope>
    <source>
        <strain>ATCC 700819 / NCTC 11168</strain>
    </source>
</reference>
<comment type="function">
    <text evidence="1">Catalyzes the condensation reaction of fatty acid synthesis by the addition to an acyl acceptor of two carbons from malonyl-ACP. Catalyzes the first condensation reaction which initiates fatty acid synthesis and may therefore play a role in governing the total rate of fatty acid production. Possesses both acetoacetyl-ACP synthase and acetyl transacylase activities. Its substrate specificity determines the biosynthesis of branched-chain and/or straight-chain of fatty acids.</text>
</comment>
<comment type="catalytic activity">
    <reaction evidence="1">
        <text>malonyl-[ACP] + acetyl-CoA + H(+) = 3-oxobutanoyl-[ACP] + CO2 + CoA</text>
        <dbReference type="Rhea" id="RHEA:12080"/>
        <dbReference type="Rhea" id="RHEA-COMP:9623"/>
        <dbReference type="Rhea" id="RHEA-COMP:9625"/>
        <dbReference type="ChEBI" id="CHEBI:15378"/>
        <dbReference type="ChEBI" id="CHEBI:16526"/>
        <dbReference type="ChEBI" id="CHEBI:57287"/>
        <dbReference type="ChEBI" id="CHEBI:57288"/>
        <dbReference type="ChEBI" id="CHEBI:78449"/>
        <dbReference type="ChEBI" id="CHEBI:78450"/>
        <dbReference type="EC" id="2.3.1.180"/>
    </reaction>
</comment>
<comment type="pathway">
    <text evidence="1">Lipid metabolism; fatty acid biosynthesis.</text>
</comment>
<comment type="subunit">
    <text evidence="1">Homodimer.</text>
</comment>
<comment type="subcellular location">
    <subcellularLocation>
        <location evidence="1">Cytoplasm</location>
    </subcellularLocation>
</comment>
<comment type="domain">
    <text evidence="1">The last Arg residue of the ACP-binding site is essential for the weak association between ACP/AcpP and FabH.</text>
</comment>
<comment type="similarity">
    <text evidence="1">Belongs to the thiolase-like superfamily. FabH family.</text>
</comment>
<accession>Q9PIH1</accession>
<accession>Q0PBI1</accession>
<proteinExistence type="inferred from homology"/>
<name>FABH_CAMJE</name>
<feature type="chain" id="PRO_0000110409" description="Beta-ketoacyl-[acyl-carrier-protein] synthase III">
    <location>
        <begin position="1"/>
        <end position="324"/>
    </location>
</feature>
<feature type="region of interest" description="ACP-binding" evidence="1">
    <location>
        <begin position="247"/>
        <end position="251"/>
    </location>
</feature>
<feature type="active site" evidence="1">
    <location>
        <position position="114"/>
    </location>
</feature>
<feature type="active site" evidence="1">
    <location>
        <position position="246"/>
    </location>
</feature>
<feature type="active site" evidence="1">
    <location>
        <position position="276"/>
    </location>
</feature>
<gene>
    <name evidence="1" type="primary">fabH</name>
    <name type="ordered locus">Cj0328c</name>
</gene>